<keyword id="KW-0067">ATP-binding</keyword>
<keyword id="KW-0347">Helicase</keyword>
<keyword id="KW-0378">Hydrolase</keyword>
<keyword id="KW-0511">Multifunctional enzyme</keyword>
<keyword id="KW-0547">Nucleotide-binding</keyword>
<keyword id="KW-0548">Nucleotidyltransferase</keyword>
<keyword id="KW-0696">RNA-directed RNA polymerase</keyword>
<keyword id="KW-0808">Transferase</keyword>
<keyword id="KW-0693">Viral RNA replication</keyword>
<reference key="1">
    <citation type="journal article" date="1993" name="J. Gen. Virol.">
        <title>RNA sequence of potato virus X strain HB.</title>
        <authorList>
            <person name="Querci M."/>
            <person name="van der Vlugt R."/>
            <person name="Goldbach R."/>
            <person name="Salazar L.F."/>
        </authorList>
    </citation>
    <scope>NUCLEOTIDE SEQUENCE [GENOMIC RNA]</scope>
</reference>
<proteinExistence type="inferred from homology"/>
<evidence type="ECO:0000255" key="1"/>
<evidence type="ECO:0000255" key="2">
    <source>
        <dbReference type="PROSITE-ProRule" id="PRU00539"/>
    </source>
</evidence>
<evidence type="ECO:0000255" key="3">
    <source>
        <dbReference type="PROSITE-ProRule" id="PRU01079"/>
    </source>
</evidence>
<evidence type="ECO:0000256" key="4">
    <source>
        <dbReference type="SAM" id="MobiDB-lite"/>
    </source>
</evidence>
<evidence type="ECO:0000305" key="5"/>
<organism>
    <name type="scientific">Potato virus X (strain HB)</name>
    <name type="common">PVX</name>
    <dbReference type="NCBI Taxonomy" id="73488"/>
    <lineage>
        <taxon>Viruses</taxon>
        <taxon>Riboviria</taxon>
        <taxon>Orthornavirae</taxon>
        <taxon>Kitrinoviricota</taxon>
        <taxon>Alsuviricetes</taxon>
        <taxon>Tymovirales</taxon>
        <taxon>Alphaflexiviridae</taxon>
        <taxon>Potexvirus</taxon>
        <taxon>Potato virus X</taxon>
    </lineage>
</organism>
<comment type="function">
    <text evidence="5">RNA replication. The central part of this protein possibly functions as an ATP-binding helicase (Probable).</text>
</comment>
<comment type="catalytic activity">
    <reaction evidence="2">
        <text>RNA(n) + a ribonucleoside 5'-triphosphate = RNA(n+1) + diphosphate</text>
        <dbReference type="Rhea" id="RHEA:21248"/>
        <dbReference type="Rhea" id="RHEA-COMP:14527"/>
        <dbReference type="Rhea" id="RHEA-COMP:17342"/>
        <dbReference type="ChEBI" id="CHEBI:33019"/>
        <dbReference type="ChEBI" id="CHEBI:61557"/>
        <dbReference type="ChEBI" id="CHEBI:140395"/>
        <dbReference type="EC" id="2.7.7.48"/>
    </reaction>
</comment>
<comment type="catalytic activity">
    <reaction>
        <text>ATP + H2O = ADP + phosphate + H(+)</text>
        <dbReference type="Rhea" id="RHEA:13065"/>
        <dbReference type="ChEBI" id="CHEBI:15377"/>
        <dbReference type="ChEBI" id="CHEBI:15378"/>
        <dbReference type="ChEBI" id="CHEBI:30616"/>
        <dbReference type="ChEBI" id="CHEBI:43474"/>
        <dbReference type="ChEBI" id="CHEBI:456216"/>
        <dbReference type="EC" id="3.6.4.13"/>
    </reaction>
</comment>
<comment type="similarity">
    <text evidence="5">Belongs to the potexvirus/carlavirus RNA replication protein family.</text>
</comment>
<protein>
    <recommendedName>
        <fullName>RNA replication protein</fullName>
    </recommendedName>
    <alternativeName>
        <fullName>165 kDa protein</fullName>
    </alternativeName>
    <alternativeName>
        <fullName>ORF1 protein</fullName>
    </alternativeName>
    <domain>
        <recommendedName>
            <fullName>RNA-directed RNA polymerase</fullName>
            <ecNumber>2.7.7.48</ecNumber>
        </recommendedName>
    </domain>
    <domain>
        <recommendedName>
            <fullName>Helicase</fullName>
            <ecNumber>3.6.4.13</ecNumber>
        </recommendedName>
    </domain>
</protein>
<sequence>MAKVREVYQSFTDSTTKTLIQDEAYRNIRPIMEKHKLSNPYAQTVEAANDLEGFGIATNPYSIELHTHAAAKTIENKLLEVLGSLLPQEPVTFMFLKPRKLNFMRRNPRIKDIFHNVAIEPRDVARYPKETIIHKLAEIKTDTAYISDTLHFLDPSYIVETFQNCPKLQTLYATLVLPVEAAFKMESTHPNIYSLKYFGDGFQYIPGNHGGGAYHHEFSHLQSVKVGKIKWRDPKDGLLGHLNYTHEQVDTHTVTVQLQESFAANHLYCIRRGNMMTPEVRTFGQPDRYVLPPQIFLPKVHNCKKPILKKTMMQLFLYVRTVKVAKNCDIFAKIRQLIKSSDLDKFSAVELVYLVSYMEFLAALQATTCFSDTLSGGLLTKTLAPVRAWIQEKKMQLCGLEDYAKLVKAVDWRPVDFSFKVETWDFRFNPLGMWKAFQPSELSDVEEMNNFFDDGDLLDCFTRMPAYAVNAEEDLAGMRGDNQGETSTAPREPEGDKKEYVNPAETFLDKLTRKHNRETKSRAAKKAKRLAEIQDSINRDQTEEESQGAPNMGEAPSNAELPGTNGAGAGTTFPTLKALPQKWEDASFTDSSMTDQMEIMPGKEAVEVATQKVVDELPWKHWLPQLNAVGFKALEIQRDRNGTMIMPITEMVFELDKEEFPEGTPEALARELKAMNRSPTTIPLDLLRARDYGSDVKNKRIGAITKTQAASWGEYLTGKIESLPERKVAACVIHGAGGSGKSHAIQKALREIGKGSDITVVLPTNELRLDWSKKVPNTEPYMFKTYEKALIGGTGSIVIFDDYSKLPPGYIEALVSFSTKIKLIILTGDSRQSVYHETSDDASIRHLGPATEVFAKYCRYYLNATHRNKKDLANMLGVYSERTGTTEISMSSEFLEGVPTLVPSDEKRKLYMGTGRNDTFTYAGCQGLTKPKVQIVLDHNTQVCSANVMYTALSRATDRIHFINTSANSSAFWEKLDSTPYLKTFLSVVREQALREYEPVEAEPIREPEPQTHMCVENEESVLEEYKEELLEKFDREIHSEAHGHSNCVQTEDTTVQLFSHQQAKDETLLWATIDARLKTSNQESNFREFLSKRDIGDVLFLNYQRAMGLPKEPIPFSQEVWEACAHEVQSKYLSKSKCNLINGTVRQSPDFDENKIMVFLKSQWVTKVEKLGLPKIKPGQTIAAFYQQTVMLFGTMARYMRWFRQAFQPKEVFINCETTPEDMSAWALSNWNFTRPSLANDYTAFDQSQDGAMLQFEVLKAKHHCIPEEIIQAYIDIKTNAQIFLGTLSIMRLTGEGPTFDANTECNIAFTHTKFDIPAGTAQVYAGDDSALDCVPEIKQSFHRLEDKLLLKSKPVITQQKKGSWPEFCGWLITPKGVMKDPIKLHVSLKLAEAKGELKKCQDSYEIDLSYAYDHKDSLHDLFDEKQCQAHTLTCRTLIKSGRGTVSLPRLRNFL</sequence>
<feature type="chain" id="PRO_0000222555" description="RNA replication protein">
    <location>
        <begin position="1"/>
        <end position="1456"/>
    </location>
</feature>
<feature type="domain" description="Alphavirus-like MT" evidence="3">
    <location>
        <begin position="59"/>
        <end position="225"/>
    </location>
</feature>
<feature type="domain" description="(+)RNA virus helicase ATP-binding">
    <location>
        <begin position="695"/>
        <end position="862"/>
    </location>
</feature>
<feature type="domain" description="(+)RNA virus helicase C-terminal">
    <location>
        <begin position="863"/>
        <end position="997"/>
    </location>
</feature>
<feature type="domain" description="RdRp catalytic" evidence="2">
    <location>
        <begin position="1236"/>
        <end position="1343"/>
    </location>
</feature>
<feature type="region of interest" description="Disordered" evidence="4">
    <location>
        <begin position="474"/>
        <end position="500"/>
    </location>
</feature>
<feature type="region of interest" description="Disordered" evidence="4">
    <location>
        <begin position="512"/>
        <end position="571"/>
    </location>
</feature>
<feature type="compositionally biased region" description="Basic and acidic residues" evidence="4">
    <location>
        <begin position="491"/>
        <end position="500"/>
    </location>
</feature>
<feature type="compositionally biased region" description="Basic residues" evidence="4">
    <location>
        <begin position="512"/>
        <end position="528"/>
    </location>
</feature>
<feature type="compositionally biased region" description="Basic and acidic residues" evidence="4">
    <location>
        <begin position="529"/>
        <end position="541"/>
    </location>
</feature>
<feature type="binding site" evidence="1">
    <location>
        <begin position="735"/>
        <end position="742"/>
    </location>
    <ligand>
        <name>ATP</name>
        <dbReference type="ChEBI" id="CHEBI:30616"/>
    </ligand>
</feature>
<accession>Q07630</accession>
<organismHost>
    <name type="scientific">Brassica campestris</name>
    <name type="common">Field mustard</name>
    <dbReference type="NCBI Taxonomy" id="3711"/>
</organismHost>
<organismHost>
    <name type="scientific">Solanum tuberosum</name>
    <name type="common">Potato</name>
    <dbReference type="NCBI Taxonomy" id="4113"/>
</organismHost>
<name>RDRP_PVXHB</name>
<dbReference type="EC" id="2.7.7.48"/>
<dbReference type="EC" id="3.6.4.13"/>
<dbReference type="EMBL" id="X72214">
    <property type="protein sequence ID" value="CAA51012.1"/>
    <property type="molecule type" value="Genomic_RNA"/>
</dbReference>
<dbReference type="PIR" id="JQ2294">
    <property type="entry name" value="JQ2294"/>
</dbReference>
<dbReference type="Proteomes" id="UP000006842">
    <property type="component" value="Genome"/>
</dbReference>
<dbReference type="GO" id="GO:0005524">
    <property type="term" value="F:ATP binding"/>
    <property type="evidence" value="ECO:0007669"/>
    <property type="project" value="UniProtKB-KW"/>
</dbReference>
<dbReference type="GO" id="GO:0016887">
    <property type="term" value="F:ATP hydrolysis activity"/>
    <property type="evidence" value="ECO:0007669"/>
    <property type="project" value="RHEA"/>
</dbReference>
<dbReference type="GO" id="GO:0008174">
    <property type="term" value="F:mRNA methyltransferase activity"/>
    <property type="evidence" value="ECO:0007669"/>
    <property type="project" value="InterPro"/>
</dbReference>
<dbReference type="GO" id="GO:0003723">
    <property type="term" value="F:RNA binding"/>
    <property type="evidence" value="ECO:0007669"/>
    <property type="project" value="InterPro"/>
</dbReference>
<dbReference type="GO" id="GO:0003724">
    <property type="term" value="F:RNA helicase activity"/>
    <property type="evidence" value="ECO:0007669"/>
    <property type="project" value="UniProtKB-EC"/>
</dbReference>
<dbReference type="GO" id="GO:0003968">
    <property type="term" value="F:RNA-directed RNA polymerase activity"/>
    <property type="evidence" value="ECO:0007669"/>
    <property type="project" value="UniProtKB-KW"/>
</dbReference>
<dbReference type="GO" id="GO:0006351">
    <property type="term" value="P:DNA-templated transcription"/>
    <property type="evidence" value="ECO:0007669"/>
    <property type="project" value="InterPro"/>
</dbReference>
<dbReference type="GO" id="GO:0016556">
    <property type="term" value="P:mRNA modification"/>
    <property type="evidence" value="ECO:0007669"/>
    <property type="project" value="InterPro"/>
</dbReference>
<dbReference type="GO" id="GO:0006396">
    <property type="term" value="P:RNA processing"/>
    <property type="evidence" value="ECO:0007669"/>
    <property type="project" value="InterPro"/>
</dbReference>
<dbReference type="GO" id="GO:0039694">
    <property type="term" value="P:viral RNA genome replication"/>
    <property type="evidence" value="ECO:0007669"/>
    <property type="project" value="InterPro"/>
</dbReference>
<dbReference type="CDD" id="cd23246">
    <property type="entry name" value="Alphaflexiviridae_RdRp"/>
    <property type="match status" value="1"/>
</dbReference>
<dbReference type="FunFam" id="3.40.50.300:FF:001668">
    <property type="entry name" value="Non-structural polyprotein pORF1"/>
    <property type="match status" value="1"/>
</dbReference>
<dbReference type="Gene3D" id="3.40.50.300">
    <property type="entry name" value="P-loop containing nucleotide triphosphate hydrolases"/>
    <property type="match status" value="1"/>
</dbReference>
<dbReference type="InterPro" id="IPR027351">
    <property type="entry name" value="(+)RNA_virus_helicase_core_dom"/>
</dbReference>
<dbReference type="InterPro" id="IPR002588">
    <property type="entry name" value="Alphavirus-like_MT_dom"/>
</dbReference>
<dbReference type="InterPro" id="IPR043502">
    <property type="entry name" value="DNA/RNA_pol_sf"/>
</dbReference>
<dbReference type="InterPro" id="IPR027417">
    <property type="entry name" value="P-loop_NTPase"/>
</dbReference>
<dbReference type="InterPro" id="IPR001788">
    <property type="entry name" value="RNA-dep_RNA_pol_alsuvir"/>
</dbReference>
<dbReference type="InterPro" id="IPR007094">
    <property type="entry name" value="RNA-dir_pol_PSvirus"/>
</dbReference>
<dbReference type="Pfam" id="PF00978">
    <property type="entry name" value="RdRP_2"/>
    <property type="match status" value="1"/>
</dbReference>
<dbReference type="Pfam" id="PF01443">
    <property type="entry name" value="Viral_helicase1"/>
    <property type="match status" value="1"/>
</dbReference>
<dbReference type="Pfam" id="PF01660">
    <property type="entry name" value="Vmethyltransf"/>
    <property type="match status" value="1"/>
</dbReference>
<dbReference type="SUPFAM" id="SSF56672">
    <property type="entry name" value="DNA/RNA polymerases"/>
    <property type="match status" value="1"/>
</dbReference>
<dbReference type="SUPFAM" id="SSF52540">
    <property type="entry name" value="P-loop containing nucleoside triphosphate hydrolases"/>
    <property type="match status" value="2"/>
</dbReference>
<dbReference type="PROSITE" id="PS51743">
    <property type="entry name" value="ALPHAVIRUS_MT"/>
    <property type="match status" value="1"/>
</dbReference>
<dbReference type="PROSITE" id="PS51657">
    <property type="entry name" value="PSRV_HELICASE"/>
    <property type="match status" value="1"/>
</dbReference>
<dbReference type="PROSITE" id="PS50507">
    <property type="entry name" value="RDRP_SSRNA_POS"/>
    <property type="match status" value="1"/>
</dbReference>